<sequence length="168" mass="18806">MLVYQDKLSGDELLSDSFPYRELENGVLWEVDGHWVVQGAVDVDIGANPSAEGGGDDEGVDDQAVKVVDIVDTFRLQEQPAFDKKQFISHMKRYIKNLSAKLEGDDLDVFKKNVESATKYLLSKLKDLQFFVGESMHDDGGVVFAYYKEGAADPTFLYFAHGLKEVKC</sequence>
<feature type="chain" id="PRO_0000252316" description="Translationally-controlled tumor protein homolog">
    <location>
        <begin position="1"/>
        <end position="168"/>
    </location>
</feature>
<feature type="domain" description="TCTP" evidence="2">
    <location>
        <begin position="1"/>
        <end position="168"/>
    </location>
</feature>
<protein>
    <recommendedName>
        <fullName>Translationally-controlled tumor protein homolog</fullName>
        <shortName>TCTP</shortName>
    </recommendedName>
</protein>
<organism>
    <name type="scientific">Triticum aestivum</name>
    <name type="common">Wheat</name>
    <dbReference type="NCBI Taxonomy" id="4565"/>
    <lineage>
        <taxon>Eukaryota</taxon>
        <taxon>Viridiplantae</taxon>
        <taxon>Streptophyta</taxon>
        <taxon>Embryophyta</taxon>
        <taxon>Tracheophyta</taxon>
        <taxon>Spermatophyta</taxon>
        <taxon>Magnoliopsida</taxon>
        <taxon>Liliopsida</taxon>
        <taxon>Poales</taxon>
        <taxon>Poaceae</taxon>
        <taxon>BOP clade</taxon>
        <taxon>Pooideae</taxon>
        <taxon>Triticodae</taxon>
        <taxon>Triticeae</taxon>
        <taxon>Triticinae</taxon>
        <taxon>Triticum</taxon>
    </lineage>
</organism>
<proteinExistence type="evidence at transcript level"/>
<comment type="function">
    <text evidence="1">Involved in calcium binding and microtubule stabilization.</text>
</comment>
<comment type="subcellular location">
    <subcellularLocation>
        <location evidence="1">Cytoplasm</location>
    </subcellularLocation>
</comment>
<comment type="similarity">
    <text evidence="2">Belongs to the TCTP family.</text>
</comment>
<name>TCTP_WHEAT</name>
<reference key="1">
    <citation type="submission" date="2002-05" db="EMBL/GenBank/DDBJ databases">
        <title>Putative wheat translationally controlled tumor protein (TCTP) gene.</title>
        <authorList>
            <person name="Lu Z.-X."/>
            <person name="Laroche A."/>
            <person name="Gaudet D."/>
        </authorList>
    </citation>
    <scope>NUCLEOTIDE SEQUENCE [MRNA]</scope>
</reference>
<keyword id="KW-0106">Calcium</keyword>
<keyword id="KW-0963">Cytoplasm</keyword>
<keyword id="KW-1185">Reference proteome</keyword>
<evidence type="ECO:0000250" key="1"/>
<evidence type="ECO:0000255" key="2">
    <source>
        <dbReference type="PROSITE-ProRule" id="PRU01133"/>
    </source>
</evidence>
<gene>
    <name type="primary">TCTP</name>
</gene>
<accession>Q8LRM8</accession>
<dbReference type="EMBL" id="AF508970">
    <property type="protein sequence ID" value="AAM34280.1"/>
    <property type="molecule type" value="mRNA"/>
</dbReference>
<dbReference type="SMR" id="Q8LRM8"/>
<dbReference type="STRING" id="4565.Q8LRM8"/>
<dbReference type="PaxDb" id="4565-Traes_4DS_AFAF2A29E.1"/>
<dbReference type="EnsemblPlants" id="TraesARI4D03G02500030.1">
    <property type="protein sequence ID" value="TraesARI4D03G02500030.1"/>
    <property type="gene ID" value="TraesARI4D03G02500030"/>
</dbReference>
<dbReference type="EnsemblPlants" id="TraesCAD_scaffold_063247_01G000300.1">
    <property type="protein sequence ID" value="TraesCAD_scaffold_063247_01G000300.1"/>
    <property type="gene ID" value="TraesCAD_scaffold_063247_01G000300"/>
</dbReference>
<dbReference type="EnsemblPlants" id="TraesJAG4D03G02458660.1">
    <property type="protein sequence ID" value="TraesJAG4D03G02458660.1"/>
    <property type="gene ID" value="TraesJAG4D03G02458660"/>
</dbReference>
<dbReference type="EnsemblPlants" id="TraesJUL4D03G02480250.1">
    <property type="protein sequence ID" value="TraesJUL4D03G02480250.1"/>
    <property type="gene ID" value="TraesJUL4D03G02480250"/>
</dbReference>
<dbReference type="EnsemblPlants" id="TraesLAC4D03G02414450.1">
    <property type="protein sequence ID" value="TraesLAC4D03G02414450.1"/>
    <property type="gene ID" value="TraesLAC4D03G02414450"/>
</dbReference>
<dbReference type="EnsemblPlants" id="TraesLDM4D03G02463510.1">
    <property type="protein sequence ID" value="TraesLDM4D03G02463510.1"/>
    <property type="gene ID" value="TraesLDM4D03G02463510"/>
</dbReference>
<dbReference type="EnsemblPlants" id="TraesMAC4D03G02459350.1">
    <property type="protein sequence ID" value="TraesMAC4D03G02459350.1"/>
    <property type="gene ID" value="TraesMAC4D03G02459350"/>
</dbReference>
<dbReference type="EnsemblPlants" id="TraesNOR4D03G02478860.1">
    <property type="protein sequence ID" value="TraesNOR4D03G02478860.1"/>
    <property type="gene ID" value="TraesNOR4D03G02478860"/>
</dbReference>
<dbReference type="EnsemblPlants" id="TraesPARA_EIv1.0_1438040.1">
    <property type="protein sequence ID" value="TraesPARA_EIv1.0_1438040.1.CDS"/>
    <property type="gene ID" value="TraesPARA_EIv1.0_1438040"/>
</dbReference>
<dbReference type="EnsemblPlants" id="TraesROB_scaffold_076628_01G000300.1">
    <property type="protein sequence ID" value="TraesROB_scaffold_076628_01G000300.1"/>
    <property type="gene ID" value="TraesROB_scaffold_076628_01G000300"/>
</dbReference>
<dbReference type="EnsemblPlants" id="TraesSTA4D03G02456550.1">
    <property type="protein sequence ID" value="TraesSTA4D03G02456550.1"/>
    <property type="gene ID" value="TraesSTA4D03G02456550"/>
</dbReference>
<dbReference type="EnsemblPlants" id="TraesSYM4D03G02488760.1">
    <property type="protein sequence ID" value="TraesSYM4D03G02488760.1"/>
    <property type="gene ID" value="TraesSYM4D03G02488760"/>
</dbReference>
<dbReference type="EnsemblPlants" id="TraesWEE_scaffold_074424_01G000200.1">
    <property type="protein sequence ID" value="TraesWEE_scaffold_074424_01G000200.1"/>
    <property type="gene ID" value="TraesWEE_scaffold_074424_01G000200"/>
</dbReference>
<dbReference type="Gramene" id="TraesARI4D03G02500030.1">
    <property type="protein sequence ID" value="TraesARI4D03G02500030.1"/>
    <property type="gene ID" value="TraesARI4D03G02500030"/>
</dbReference>
<dbReference type="Gramene" id="TraesCAD_scaffold_063247_01G000300.1">
    <property type="protein sequence ID" value="TraesCAD_scaffold_063247_01G000300.1"/>
    <property type="gene ID" value="TraesCAD_scaffold_063247_01G000300"/>
</dbReference>
<dbReference type="Gramene" id="TraesJAG4D03G02458660.1">
    <property type="protein sequence ID" value="TraesJAG4D03G02458660.1"/>
    <property type="gene ID" value="TraesJAG4D03G02458660"/>
</dbReference>
<dbReference type="Gramene" id="TraesJUL4D03G02480250.1">
    <property type="protein sequence ID" value="TraesJUL4D03G02480250.1"/>
    <property type="gene ID" value="TraesJUL4D03G02480250"/>
</dbReference>
<dbReference type="Gramene" id="TraesLAC4D03G02414450.1">
    <property type="protein sequence ID" value="TraesLAC4D03G02414450.1"/>
    <property type="gene ID" value="TraesLAC4D03G02414450"/>
</dbReference>
<dbReference type="Gramene" id="TraesLDM4D03G02463510.1">
    <property type="protein sequence ID" value="TraesLDM4D03G02463510.1"/>
    <property type="gene ID" value="TraesLDM4D03G02463510"/>
</dbReference>
<dbReference type="Gramene" id="TraesMAC4D03G02459350.1">
    <property type="protein sequence ID" value="TraesMAC4D03G02459350.1"/>
    <property type="gene ID" value="TraesMAC4D03G02459350"/>
</dbReference>
<dbReference type="Gramene" id="TraesNOR4D03G02478860.1">
    <property type="protein sequence ID" value="TraesNOR4D03G02478860.1"/>
    <property type="gene ID" value="TraesNOR4D03G02478860"/>
</dbReference>
<dbReference type="Gramene" id="TraesPARA_EIv1.0_1438040.1">
    <property type="protein sequence ID" value="TraesPARA_EIv1.0_1438040.1.CDS"/>
    <property type="gene ID" value="TraesPARA_EIv1.0_1438040"/>
</dbReference>
<dbReference type="Gramene" id="TraesROB_scaffold_076628_01G000300.1">
    <property type="protein sequence ID" value="TraesROB_scaffold_076628_01G000300.1"/>
    <property type="gene ID" value="TraesROB_scaffold_076628_01G000300"/>
</dbReference>
<dbReference type="Gramene" id="TraesSTA4D03G02456550.1">
    <property type="protein sequence ID" value="TraesSTA4D03G02456550.1"/>
    <property type="gene ID" value="TraesSTA4D03G02456550"/>
</dbReference>
<dbReference type="Gramene" id="TraesSYM4D03G02488760.1">
    <property type="protein sequence ID" value="TraesSYM4D03G02488760.1"/>
    <property type="gene ID" value="TraesSYM4D03G02488760"/>
</dbReference>
<dbReference type="Gramene" id="TraesWEE_scaffold_074424_01G000200.1">
    <property type="protein sequence ID" value="TraesWEE_scaffold_074424_01G000200.1"/>
    <property type="gene ID" value="TraesWEE_scaffold_074424_01G000200"/>
</dbReference>
<dbReference type="eggNOG" id="KOG1727">
    <property type="taxonomic scope" value="Eukaryota"/>
</dbReference>
<dbReference type="HOGENOM" id="CLU_095877_1_1_1"/>
<dbReference type="Proteomes" id="UP000019116">
    <property type="component" value="Unplaced"/>
</dbReference>
<dbReference type="ExpressionAtlas" id="Q8LRM8">
    <property type="expression patterns" value="baseline and differential"/>
</dbReference>
<dbReference type="GO" id="GO:0005737">
    <property type="term" value="C:cytoplasm"/>
    <property type="evidence" value="ECO:0000318"/>
    <property type="project" value="GO_Central"/>
</dbReference>
<dbReference type="GO" id="GO:0005509">
    <property type="term" value="F:calcium ion binding"/>
    <property type="evidence" value="ECO:0000318"/>
    <property type="project" value="GO_Central"/>
</dbReference>
<dbReference type="FunFam" id="2.170.150.10:FF:000003">
    <property type="entry name" value="Translationally-controlled tumor protein homolog"/>
    <property type="match status" value="1"/>
</dbReference>
<dbReference type="Gene3D" id="2.170.150.10">
    <property type="entry name" value="Metal Binding Protein, Guanine Nucleotide Exchange Factor, Chain A"/>
    <property type="match status" value="1"/>
</dbReference>
<dbReference type="InterPro" id="IPR011057">
    <property type="entry name" value="Mss4-like_sf"/>
</dbReference>
<dbReference type="InterPro" id="IPR011323">
    <property type="entry name" value="Mss4/transl-control_tumour"/>
</dbReference>
<dbReference type="InterPro" id="IPR034737">
    <property type="entry name" value="TCTP"/>
</dbReference>
<dbReference type="InterPro" id="IPR018103">
    <property type="entry name" value="Translation_control_tumour_CS"/>
</dbReference>
<dbReference type="InterPro" id="IPR018105">
    <property type="entry name" value="Translational_control_tumour_p"/>
</dbReference>
<dbReference type="PANTHER" id="PTHR11991">
    <property type="entry name" value="TRANSLATIONALLY CONTROLLED TUMOR PROTEIN-RELATED"/>
    <property type="match status" value="1"/>
</dbReference>
<dbReference type="PANTHER" id="PTHR11991:SF0">
    <property type="entry name" value="TRANSLATIONALLY-CONTROLLED TUMOR PROTEIN"/>
    <property type="match status" value="1"/>
</dbReference>
<dbReference type="Pfam" id="PF00838">
    <property type="entry name" value="TCTP"/>
    <property type="match status" value="1"/>
</dbReference>
<dbReference type="PRINTS" id="PR01653">
    <property type="entry name" value="TCTPROTEIN"/>
</dbReference>
<dbReference type="SUPFAM" id="SSF51316">
    <property type="entry name" value="Mss4-like"/>
    <property type="match status" value="1"/>
</dbReference>
<dbReference type="PROSITE" id="PS01002">
    <property type="entry name" value="TCTP_1"/>
    <property type="match status" value="1"/>
</dbReference>
<dbReference type="PROSITE" id="PS01003">
    <property type="entry name" value="TCTP_2"/>
    <property type="match status" value="1"/>
</dbReference>
<dbReference type="PROSITE" id="PS51797">
    <property type="entry name" value="TCTP_3"/>
    <property type="match status" value="1"/>
</dbReference>